<feature type="chain" id="PRO_0000217063" description="Antiholin-like protein LrgB">
    <location>
        <begin position="1"/>
        <end position="233"/>
    </location>
</feature>
<feature type="transmembrane region" description="Helical" evidence="1">
    <location>
        <begin position="5"/>
        <end position="25"/>
    </location>
</feature>
<feature type="transmembrane region" description="Helical" evidence="1">
    <location>
        <begin position="33"/>
        <end position="53"/>
    </location>
</feature>
<feature type="transmembrane region" description="Helical" evidence="1">
    <location>
        <begin position="63"/>
        <end position="83"/>
    </location>
</feature>
<feature type="transmembrane region" description="Helical" evidence="1">
    <location>
        <begin position="97"/>
        <end position="117"/>
    </location>
</feature>
<feature type="transmembrane region" description="Helical" evidence="1">
    <location>
        <begin position="152"/>
        <end position="172"/>
    </location>
</feature>
<feature type="transmembrane region" description="Helical" evidence="1">
    <location>
        <begin position="212"/>
        <end position="232"/>
    </location>
</feature>
<sequence>MIEHLGINTPYFGILVSLIPFVIATYFYKKTNGFFLLAPLFVSMVAGIAFLKLTGISYENYKIGGDIINFFLEPATICFAIPLYRKREVLKRYWLQIFGGIAVGTIIALLLIYLVAITFQFGNQIIASMLPQAATTAIALPVSDGIGGVKELTSLAVILNAVVISALGAKIVKLFKISNPIARGLALGTSGHTLGVAAAKELGETEESMGSIAVVIVGVIVVAVVPILAPILL</sequence>
<comment type="function">
    <text evidence="1">Inhibits the expression or activity of extracellular murein hydrolases by interacting, possibly with LrgA, with the holin-like proteins CidA and/or CidB. The LrgAB and CidAB proteins may affect the proton motive force of the membrane. May be involved in programmed cell death (PCD), possibly triggering PCD in response to antibiotics and environmental stresses.</text>
</comment>
<comment type="subcellular location">
    <subcellularLocation>
        <location evidence="1">Cell membrane</location>
        <topology evidence="1">Multi-pass membrane protein</topology>
    </subcellularLocation>
</comment>
<comment type="similarity">
    <text evidence="1">Belongs to the CidB/LrgB family. LrgB subfamily.</text>
</comment>
<keyword id="KW-1003">Cell membrane</keyword>
<keyword id="KW-0204">Cytolysis</keyword>
<keyword id="KW-0472">Membrane</keyword>
<keyword id="KW-0812">Transmembrane</keyword>
<keyword id="KW-1133">Transmembrane helix</keyword>
<dbReference type="EMBL" id="AE015929">
    <property type="protein sequence ID" value="AAO05655.1"/>
    <property type="molecule type" value="Genomic_DNA"/>
</dbReference>
<dbReference type="RefSeq" id="NP_765569.1">
    <property type="nucleotide sequence ID" value="NC_004461.1"/>
</dbReference>
<dbReference type="RefSeq" id="WP_001831408.1">
    <property type="nucleotide sequence ID" value="NZ_WBME01000003.1"/>
</dbReference>
<dbReference type="KEGG" id="sep:SE_2014"/>
<dbReference type="PATRIC" id="fig|176280.10.peg.1967"/>
<dbReference type="eggNOG" id="COG1346">
    <property type="taxonomic scope" value="Bacteria"/>
</dbReference>
<dbReference type="HOGENOM" id="CLU_082099_1_0_9"/>
<dbReference type="OrthoDB" id="9811701at2"/>
<dbReference type="Proteomes" id="UP000001411">
    <property type="component" value="Chromosome"/>
</dbReference>
<dbReference type="GO" id="GO:0005886">
    <property type="term" value="C:plasma membrane"/>
    <property type="evidence" value="ECO:0007669"/>
    <property type="project" value="UniProtKB-SubCell"/>
</dbReference>
<dbReference type="GO" id="GO:0019835">
    <property type="term" value="P:cytolysis"/>
    <property type="evidence" value="ECO:0007669"/>
    <property type="project" value="UniProtKB-UniRule"/>
</dbReference>
<dbReference type="GO" id="GO:0031640">
    <property type="term" value="P:killing of cells of another organism"/>
    <property type="evidence" value="ECO:0007669"/>
    <property type="project" value="UniProtKB-KW"/>
</dbReference>
<dbReference type="GO" id="GO:0012501">
    <property type="term" value="P:programmed cell death"/>
    <property type="evidence" value="ECO:0007669"/>
    <property type="project" value="UniProtKB-UniRule"/>
</dbReference>
<dbReference type="HAMAP" id="MF_01142">
    <property type="entry name" value="LrgB"/>
    <property type="match status" value="1"/>
</dbReference>
<dbReference type="InterPro" id="IPR024891">
    <property type="entry name" value="Antiholin-like_LrgB"/>
</dbReference>
<dbReference type="InterPro" id="IPR007300">
    <property type="entry name" value="CidB/LrgB"/>
</dbReference>
<dbReference type="NCBIfam" id="NF003291">
    <property type="entry name" value="PRK04288.1"/>
    <property type="match status" value="1"/>
</dbReference>
<dbReference type="PANTHER" id="PTHR30249:SF0">
    <property type="entry name" value="PLASTIDAL GLYCOLATE_GLYCERATE TRANSLOCATOR 1, CHLOROPLASTIC"/>
    <property type="match status" value="1"/>
</dbReference>
<dbReference type="PANTHER" id="PTHR30249">
    <property type="entry name" value="PUTATIVE SEROTONIN TRANSPORTER"/>
    <property type="match status" value="1"/>
</dbReference>
<dbReference type="Pfam" id="PF04172">
    <property type="entry name" value="LrgB"/>
    <property type="match status" value="1"/>
</dbReference>
<reference key="1">
    <citation type="journal article" date="2003" name="Mol. Microbiol.">
        <title>Genome-based analysis of virulence genes in a non-biofilm-forming Staphylococcus epidermidis strain (ATCC 12228).</title>
        <authorList>
            <person name="Zhang Y.-Q."/>
            <person name="Ren S.-X."/>
            <person name="Li H.-L."/>
            <person name="Wang Y.-X."/>
            <person name="Fu G."/>
            <person name="Yang J."/>
            <person name="Qin Z.-Q."/>
            <person name="Miao Y.-G."/>
            <person name="Wang W.-Y."/>
            <person name="Chen R.-S."/>
            <person name="Shen Y."/>
            <person name="Chen Z."/>
            <person name="Yuan Z.-H."/>
            <person name="Zhao G.-P."/>
            <person name="Qu D."/>
            <person name="Danchin A."/>
            <person name="Wen Y.-M."/>
        </authorList>
    </citation>
    <scope>NUCLEOTIDE SEQUENCE [LARGE SCALE GENOMIC DNA]</scope>
    <source>
        <strain>ATCC 12228 / FDA PCI 1200</strain>
    </source>
</reference>
<name>LRGB_STAES</name>
<gene>
    <name evidence="1" type="primary">lrgB</name>
    <name type="ordered locus">SE_2014</name>
</gene>
<protein>
    <recommendedName>
        <fullName evidence="1">Antiholin-like protein LrgB</fullName>
    </recommendedName>
</protein>
<proteinExistence type="inferred from homology"/>
<evidence type="ECO:0000255" key="1">
    <source>
        <dbReference type="HAMAP-Rule" id="MF_01142"/>
    </source>
</evidence>
<organism>
    <name type="scientific">Staphylococcus epidermidis (strain ATCC 12228 / FDA PCI 1200)</name>
    <dbReference type="NCBI Taxonomy" id="176280"/>
    <lineage>
        <taxon>Bacteria</taxon>
        <taxon>Bacillati</taxon>
        <taxon>Bacillota</taxon>
        <taxon>Bacilli</taxon>
        <taxon>Bacillales</taxon>
        <taxon>Staphylococcaceae</taxon>
        <taxon>Staphylococcus</taxon>
    </lineage>
</organism>
<accession>Q8CN53</accession>